<protein>
    <recommendedName>
        <fullName evidence="1">Lipoprotein-releasing system ATP-binding protein LolD</fullName>
        <ecNumber evidence="1">7.6.2.-</ecNumber>
    </recommendedName>
</protein>
<evidence type="ECO:0000255" key="1">
    <source>
        <dbReference type="HAMAP-Rule" id="MF_01708"/>
    </source>
</evidence>
<accession>O83590</accession>
<reference key="1">
    <citation type="journal article" date="1998" name="Science">
        <title>Complete genome sequence of Treponema pallidum, the syphilis spirochete.</title>
        <authorList>
            <person name="Fraser C.M."/>
            <person name="Norris S.J."/>
            <person name="Weinstock G.M."/>
            <person name="White O."/>
            <person name="Sutton G.G."/>
            <person name="Dodson R.J."/>
            <person name="Gwinn M.L."/>
            <person name="Hickey E.K."/>
            <person name="Clayton R.A."/>
            <person name="Ketchum K.A."/>
            <person name="Sodergren E."/>
            <person name="Hardham J.M."/>
            <person name="McLeod M.P."/>
            <person name="Salzberg S.L."/>
            <person name="Peterson J.D."/>
            <person name="Khalak H.G."/>
            <person name="Richardson D.L."/>
            <person name="Howell J.K."/>
            <person name="Chidambaram M."/>
            <person name="Utterback T.R."/>
            <person name="McDonald L.A."/>
            <person name="Artiach P."/>
            <person name="Bowman C."/>
            <person name="Cotton M.D."/>
            <person name="Fujii C."/>
            <person name="Garland S.A."/>
            <person name="Hatch B."/>
            <person name="Horst K."/>
            <person name="Roberts K.M."/>
            <person name="Sandusky M."/>
            <person name="Weidman J.F."/>
            <person name="Smith H.O."/>
            <person name="Venter J.C."/>
        </authorList>
    </citation>
    <scope>NUCLEOTIDE SEQUENCE [LARGE SCALE GENOMIC DNA]</scope>
    <source>
        <strain>Nichols</strain>
    </source>
</reference>
<keyword id="KW-0067">ATP-binding</keyword>
<keyword id="KW-0997">Cell inner membrane</keyword>
<keyword id="KW-1003">Cell membrane</keyword>
<keyword id="KW-0472">Membrane</keyword>
<keyword id="KW-0547">Nucleotide-binding</keyword>
<keyword id="KW-1185">Reference proteome</keyword>
<keyword id="KW-1278">Translocase</keyword>
<keyword id="KW-0813">Transport</keyword>
<gene>
    <name evidence="1" type="primary">lolD</name>
    <name type="ordered locus">TP_0581</name>
</gene>
<name>LOLD_TREPA</name>
<sequence>MNDPILSVEQVSKSFCCATERIQILSDVSFSVPRAVKVAITGESGCGKSTLLNIIGGMEHADSGIVRVLSCDVLTLHEHALTEYRRQFLGLVFQFHHLLRDFTALENVMLPGLIAGKSYREVRARAYELLEKVRVVQRAHHFPAQMSGGERQRTAVARALINDPTLILADEPTGNLDPKNALIVQDLLFSLTEEYQKTLLIVTHDPRIASMTDYRYQLQQGSLIRI</sequence>
<dbReference type="EC" id="7.6.2.-" evidence="1"/>
<dbReference type="EMBL" id="AE000520">
    <property type="protein sequence ID" value="AAC65555.1"/>
    <property type="molecule type" value="Genomic_DNA"/>
</dbReference>
<dbReference type="PIR" id="C71307">
    <property type="entry name" value="C71307"/>
</dbReference>
<dbReference type="RefSeq" id="WP_010882027.1">
    <property type="nucleotide sequence ID" value="NC_021490.2"/>
</dbReference>
<dbReference type="SMR" id="O83590"/>
<dbReference type="STRING" id="243276.TP_0581"/>
<dbReference type="EnsemblBacteria" id="AAC65555">
    <property type="protein sequence ID" value="AAC65555"/>
    <property type="gene ID" value="TP_0581"/>
</dbReference>
<dbReference type="KEGG" id="tpa:TP_0581"/>
<dbReference type="KEGG" id="tpw:TPANIC_0581"/>
<dbReference type="eggNOG" id="COG1136">
    <property type="taxonomic scope" value="Bacteria"/>
</dbReference>
<dbReference type="HOGENOM" id="CLU_000604_1_22_12"/>
<dbReference type="OrthoDB" id="9805538at2"/>
<dbReference type="Proteomes" id="UP000000811">
    <property type="component" value="Chromosome"/>
</dbReference>
<dbReference type="GO" id="GO:0005886">
    <property type="term" value="C:plasma membrane"/>
    <property type="evidence" value="ECO:0007669"/>
    <property type="project" value="UniProtKB-SubCell"/>
</dbReference>
<dbReference type="GO" id="GO:0005524">
    <property type="term" value="F:ATP binding"/>
    <property type="evidence" value="ECO:0007669"/>
    <property type="project" value="UniProtKB-KW"/>
</dbReference>
<dbReference type="GO" id="GO:0016887">
    <property type="term" value="F:ATP hydrolysis activity"/>
    <property type="evidence" value="ECO:0007669"/>
    <property type="project" value="InterPro"/>
</dbReference>
<dbReference type="CDD" id="cd03255">
    <property type="entry name" value="ABC_MJ0796_LolCDE_FtsE"/>
    <property type="match status" value="1"/>
</dbReference>
<dbReference type="Gene3D" id="3.40.50.300">
    <property type="entry name" value="P-loop containing nucleotide triphosphate hydrolases"/>
    <property type="match status" value="1"/>
</dbReference>
<dbReference type="InterPro" id="IPR003593">
    <property type="entry name" value="AAA+_ATPase"/>
</dbReference>
<dbReference type="InterPro" id="IPR003439">
    <property type="entry name" value="ABC_transporter-like_ATP-bd"/>
</dbReference>
<dbReference type="InterPro" id="IPR017911">
    <property type="entry name" value="MacB-like_ATP-bd"/>
</dbReference>
<dbReference type="InterPro" id="IPR027417">
    <property type="entry name" value="P-loop_NTPase"/>
</dbReference>
<dbReference type="PANTHER" id="PTHR42798:SF2">
    <property type="entry name" value="ABC TRANSPORTER ATP-BINDING PROTEIN MG467-RELATED"/>
    <property type="match status" value="1"/>
</dbReference>
<dbReference type="PANTHER" id="PTHR42798">
    <property type="entry name" value="LIPOPROTEIN-RELEASING SYSTEM ATP-BINDING PROTEIN LOLD"/>
    <property type="match status" value="1"/>
</dbReference>
<dbReference type="Pfam" id="PF00005">
    <property type="entry name" value="ABC_tran"/>
    <property type="match status" value="1"/>
</dbReference>
<dbReference type="SMART" id="SM00382">
    <property type="entry name" value="AAA"/>
    <property type="match status" value="1"/>
</dbReference>
<dbReference type="SUPFAM" id="SSF52540">
    <property type="entry name" value="P-loop containing nucleoside triphosphate hydrolases"/>
    <property type="match status" value="1"/>
</dbReference>
<dbReference type="PROSITE" id="PS50893">
    <property type="entry name" value="ABC_TRANSPORTER_2"/>
    <property type="match status" value="1"/>
</dbReference>
<dbReference type="PROSITE" id="PS51244">
    <property type="entry name" value="LOLD"/>
    <property type="match status" value="1"/>
</dbReference>
<feature type="chain" id="PRO_0000092462" description="Lipoprotein-releasing system ATP-binding protein LolD">
    <location>
        <begin position="1"/>
        <end position="226"/>
    </location>
</feature>
<feature type="domain" description="ABC transporter" evidence="1">
    <location>
        <begin position="6"/>
        <end position="226"/>
    </location>
</feature>
<feature type="binding site" evidence="1">
    <location>
        <begin position="42"/>
        <end position="49"/>
    </location>
    <ligand>
        <name>ATP</name>
        <dbReference type="ChEBI" id="CHEBI:30616"/>
    </ligand>
</feature>
<organism>
    <name type="scientific">Treponema pallidum (strain Nichols)</name>
    <dbReference type="NCBI Taxonomy" id="243276"/>
    <lineage>
        <taxon>Bacteria</taxon>
        <taxon>Pseudomonadati</taxon>
        <taxon>Spirochaetota</taxon>
        <taxon>Spirochaetia</taxon>
        <taxon>Spirochaetales</taxon>
        <taxon>Treponemataceae</taxon>
        <taxon>Treponema</taxon>
    </lineage>
</organism>
<comment type="function">
    <text evidence="1">Part of the ABC transporter complex LolCDE involved in the translocation of mature outer membrane-directed lipoproteins, from the inner membrane to the periplasmic chaperone, LolA. Responsible for the formation of the LolA-lipoprotein complex in an ATP-dependent manner.</text>
</comment>
<comment type="subunit">
    <text evidence="1">The complex is composed of two ATP-binding proteins (LolD) and two transmembrane proteins (LolC and LolE).</text>
</comment>
<comment type="subcellular location">
    <subcellularLocation>
        <location evidence="1">Cell inner membrane</location>
        <topology evidence="1">Peripheral membrane protein</topology>
    </subcellularLocation>
</comment>
<comment type="similarity">
    <text evidence="1">Belongs to the ABC transporter superfamily. Lipoprotein translocase (TC 3.A.1.125) family.</text>
</comment>
<proteinExistence type="inferred from homology"/>